<evidence type="ECO:0000250" key="1"/>
<evidence type="ECO:0000305" key="2"/>
<gene>
    <name type="primary">Gadd45g</name>
</gene>
<comment type="function">
    <text>Involved in the regulation of growth and apoptosis. Mediates activation of stress-responsive MTK1/MEKK4 MAPKKK.</text>
</comment>
<comment type="subunit">
    <text evidence="1">Undergoes concentration-dependent homodimerization, which is required for growth inhibititory activity and enhances interaction with PCNA. Interacts with GADD45GIP1. Interacts with PCNA (By similarity).</text>
</comment>
<comment type="domain">
    <text evidence="1">Two central helices mediate homodimerization through parallel packing.</text>
</comment>
<comment type="similarity">
    <text evidence="2">Belongs to the GADD45 family.</text>
</comment>
<feature type="chain" id="PRO_0000148338" description="Growth arrest and DNA damage-inducible protein GADD45 gamma">
    <location>
        <begin position="1"/>
        <end position="159"/>
    </location>
</feature>
<feature type="region of interest" description="Homodimerization" evidence="1">
    <location>
        <begin position="43"/>
        <end position="86"/>
    </location>
</feature>
<sequence length="159" mass="17287">MTLEEVRGQDTVPESTARMQGAGKALHELLLSAQRQGCLTAGVYESAKVLNVDPDNVTFCVLAADEEDEGDIALQIHFTLIQAFCCENDIDIVRVGDVQRLAAIVGADDEGGAPGDLHCILISNPNEDTWKDPALEKLSLFCEESRSFNDWVPSITLPE</sequence>
<accession>Q9WTQ7</accession>
<proteinExistence type="evidence at transcript level"/>
<reference key="1">
    <citation type="journal article" date="1999" name="FEBS Lett.">
        <title>Molecular cloning of rat GADD45gamma, gene induction and its role during neuronal cell death.</title>
        <authorList>
            <person name="Kojima S."/>
            <person name="Mayumi-Matsuda K."/>
            <person name="Suzuki H."/>
            <person name="Sakata T."/>
        </authorList>
    </citation>
    <scope>NUCLEOTIDE SEQUENCE [MRNA]</scope>
</reference>
<organism>
    <name type="scientific">Rattus norvegicus</name>
    <name type="common">Rat</name>
    <dbReference type="NCBI Taxonomy" id="10116"/>
    <lineage>
        <taxon>Eukaryota</taxon>
        <taxon>Metazoa</taxon>
        <taxon>Chordata</taxon>
        <taxon>Craniata</taxon>
        <taxon>Vertebrata</taxon>
        <taxon>Euteleostomi</taxon>
        <taxon>Mammalia</taxon>
        <taxon>Eutheria</taxon>
        <taxon>Euarchontoglires</taxon>
        <taxon>Glires</taxon>
        <taxon>Rodentia</taxon>
        <taxon>Myomorpha</taxon>
        <taxon>Muroidea</taxon>
        <taxon>Muridae</taxon>
        <taxon>Murinae</taxon>
        <taxon>Rattus</taxon>
    </lineage>
</organism>
<dbReference type="EMBL" id="AB020978">
    <property type="protein sequence ID" value="BAA78094.1"/>
    <property type="molecule type" value="mRNA"/>
</dbReference>
<dbReference type="RefSeq" id="NP_001071108.1">
    <property type="nucleotide sequence ID" value="NM_001077640.2"/>
</dbReference>
<dbReference type="SMR" id="Q9WTQ7"/>
<dbReference type="FunCoup" id="Q9WTQ7">
    <property type="interactions" value="518"/>
</dbReference>
<dbReference type="STRING" id="10116.ENSRNOP00000018251"/>
<dbReference type="PaxDb" id="10116-ENSRNOP00000018251"/>
<dbReference type="Ensembl" id="ENSRNOT00000018252.8">
    <property type="protein sequence ID" value="ENSRNOP00000018251.4"/>
    <property type="gene ID" value="ENSRNOG00000013090.8"/>
</dbReference>
<dbReference type="GeneID" id="291005"/>
<dbReference type="KEGG" id="rno:291005"/>
<dbReference type="AGR" id="RGD:1311796"/>
<dbReference type="CTD" id="10912"/>
<dbReference type="RGD" id="1311796">
    <property type="gene designation" value="Gadd45g"/>
</dbReference>
<dbReference type="eggNOG" id="ENOG502RXKU">
    <property type="taxonomic scope" value="Eukaryota"/>
</dbReference>
<dbReference type="GeneTree" id="ENSGT00950000182964"/>
<dbReference type="HOGENOM" id="CLU_118164_0_0_1"/>
<dbReference type="InParanoid" id="Q9WTQ7"/>
<dbReference type="OMA" id="SRSAYDW"/>
<dbReference type="OrthoDB" id="5976967at2759"/>
<dbReference type="PhylomeDB" id="Q9WTQ7"/>
<dbReference type="TreeFam" id="TF300196"/>
<dbReference type="PRO" id="PR:Q9WTQ7"/>
<dbReference type="Proteomes" id="UP000002494">
    <property type="component" value="Chromosome 17"/>
</dbReference>
<dbReference type="Bgee" id="ENSRNOG00000013090">
    <property type="expression patterns" value="Expressed in skeletal muscle tissue and 19 other cell types or tissues"/>
</dbReference>
<dbReference type="ExpressionAtlas" id="Q9WTQ7">
    <property type="expression patterns" value="baseline and differential"/>
</dbReference>
<dbReference type="GO" id="GO:0005737">
    <property type="term" value="C:cytoplasm"/>
    <property type="evidence" value="ECO:0000266"/>
    <property type="project" value="RGD"/>
</dbReference>
<dbReference type="GO" id="GO:0005634">
    <property type="term" value="C:nucleus"/>
    <property type="evidence" value="ECO:0000266"/>
    <property type="project" value="RGD"/>
</dbReference>
<dbReference type="GO" id="GO:0042802">
    <property type="term" value="F:identical protein binding"/>
    <property type="evidence" value="ECO:0000266"/>
    <property type="project" value="RGD"/>
</dbReference>
<dbReference type="GO" id="GO:0006915">
    <property type="term" value="P:apoptotic process"/>
    <property type="evidence" value="ECO:0007669"/>
    <property type="project" value="UniProtKB-KW"/>
</dbReference>
<dbReference type="GO" id="GO:0030154">
    <property type="term" value="P:cell differentiation"/>
    <property type="evidence" value="ECO:0007669"/>
    <property type="project" value="UniProtKB-KW"/>
</dbReference>
<dbReference type="GO" id="GO:0043065">
    <property type="term" value="P:positive regulation of apoptotic process"/>
    <property type="evidence" value="ECO:0000266"/>
    <property type="project" value="RGD"/>
</dbReference>
<dbReference type="GO" id="GO:0120162">
    <property type="term" value="P:positive regulation of cold-induced thermogenesis"/>
    <property type="evidence" value="ECO:0000250"/>
    <property type="project" value="YuBioLab"/>
</dbReference>
<dbReference type="GO" id="GO:0046330">
    <property type="term" value="P:positive regulation of JNK cascade"/>
    <property type="evidence" value="ECO:0000266"/>
    <property type="project" value="RGD"/>
</dbReference>
<dbReference type="GO" id="GO:0043410">
    <property type="term" value="P:positive regulation of MAPK cascade"/>
    <property type="evidence" value="ECO:0000266"/>
    <property type="project" value="RGD"/>
</dbReference>
<dbReference type="GO" id="GO:1900745">
    <property type="term" value="P:positive regulation of p38MAPK cascade"/>
    <property type="evidence" value="ECO:0000266"/>
    <property type="project" value="RGD"/>
</dbReference>
<dbReference type="GO" id="GO:0051726">
    <property type="term" value="P:regulation of cell cycle"/>
    <property type="evidence" value="ECO:0000266"/>
    <property type="project" value="RGD"/>
</dbReference>
<dbReference type="FunFam" id="3.30.1330.30:FF:000018">
    <property type="entry name" value="growth arrest and DNA damage-inducible protein GADD45 gamma"/>
    <property type="match status" value="1"/>
</dbReference>
<dbReference type="Gene3D" id="3.30.1330.30">
    <property type="match status" value="1"/>
</dbReference>
<dbReference type="InterPro" id="IPR024824">
    <property type="entry name" value="GADD45"/>
</dbReference>
<dbReference type="InterPro" id="IPR029064">
    <property type="entry name" value="Ribosomal_eL30-like_sf"/>
</dbReference>
<dbReference type="InterPro" id="IPR004038">
    <property type="entry name" value="Ribosomal_eL8/eL30/eS12/Gad45"/>
</dbReference>
<dbReference type="PANTHER" id="PTHR10411">
    <property type="entry name" value="GROWTH ARREST AND DNA DAMAGE-INDUCIBLE PROTEIN GADD45"/>
    <property type="match status" value="1"/>
</dbReference>
<dbReference type="PANTHER" id="PTHR10411:SF4">
    <property type="entry name" value="GROWTH ARREST AND DNA DAMAGE-INDUCIBLE PROTEIN GADD45 GAMMA"/>
    <property type="match status" value="1"/>
</dbReference>
<dbReference type="Pfam" id="PF01248">
    <property type="entry name" value="Ribosomal_L7Ae"/>
    <property type="match status" value="1"/>
</dbReference>
<dbReference type="SUPFAM" id="SSF55315">
    <property type="entry name" value="L30e-like"/>
    <property type="match status" value="1"/>
</dbReference>
<keyword id="KW-0053">Apoptosis</keyword>
<keyword id="KW-0217">Developmental protein</keyword>
<keyword id="KW-0221">Differentiation</keyword>
<keyword id="KW-1185">Reference proteome</keyword>
<protein>
    <recommendedName>
        <fullName>Growth arrest and DNA damage-inducible protein GADD45 gamma</fullName>
    </recommendedName>
</protein>
<name>GA45G_RAT</name>